<reference key="1">
    <citation type="journal article" date="2004" name="Nature">
        <title>Genome evolution in yeasts.</title>
        <authorList>
            <person name="Dujon B."/>
            <person name="Sherman D."/>
            <person name="Fischer G."/>
            <person name="Durrens P."/>
            <person name="Casaregola S."/>
            <person name="Lafontaine I."/>
            <person name="de Montigny J."/>
            <person name="Marck C."/>
            <person name="Neuveglise C."/>
            <person name="Talla E."/>
            <person name="Goffard N."/>
            <person name="Frangeul L."/>
            <person name="Aigle M."/>
            <person name="Anthouard V."/>
            <person name="Babour A."/>
            <person name="Barbe V."/>
            <person name="Barnay S."/>
            <person name="Blanchin S."/>
            <person name="Beckerich J.-M."/>
            <person name="Beyne E."/>
            <person name="Bleykasten C."/>
            <person name="Boisrame A."/>
            <person name="Boyer J."/>
            <person name="Cattolico L."/>
            <person name="Confanioleri F."/>
            <person name="de Daruvar A."/>
            <person name="Despons L."/>
            <person name="Fabre E."/>
            <person name="Fairhead C."/>
            <person name="Ferry-Dumazet H."/>
            <person name="Groppi A."/>
            <person name="Hantraye F."/>
            <person name="Hennequin C."/>
            <person name="Jauniaux N."/>
            <person name="Joyet P."/>
            <person name="Kachouri R."/>
            <person name="Kerrest A."/>
            <person name="Koszul R."/>
            <person name="Lemaire M."/>
            <person name="Lesur I."/>
            <person name="Ma L."/>
            <person name="Muller H."/>
            <person name="Nicaud J.-M."/>
            <person name="Nikolski M."/>
            <person name="Oztas S."/>
            <person name="Ozier-Kalogeropoulos O."/>
            <person name="Pellenz S."/>
            <person name="Potier S."/>
            <person name="Richard G.-F."/>
            <person name="Straub M.-L."/>
            <person name="Suleau A."/>
            <person name="Swennen D."/>
            <person name="Tekaia F."/>
            <person name="Wesolowski-Louvel M."/>
            <person name="Westhof E."/>
            <person name="Wirth B."/>
            <person name="Zeniou-Meyer M."/>
            <person name="Zivanovic Y."/>
            <person name="Bolotin-Fukuhara M."/>
            <person name="Thierry A."/>
            <person name="Bouchier C."/>
            <person name="Caudron B."/>
            <person name="Scarpelli C."/>
            <person name="Gaillardin C."/>
            <person name="Weissenbach J."/>
            <person name="Wincker P."/>
            <person name="Souciet J.-L."/>
        </authorList>
    </citation>
    <scope>NUCLEOTIDE SEQUENCE [LARGE SCALE GENOMIC DNA]</scope>
    <source>
        <strain>ATCC 8585 / CBS 2359 / DSM 70799 / NBRC 1267 / NRRL Y-1140 / WM37</strain>
    </source>
</reference>
<organism>
    <name type="scientific">Kluyveromyces lactis (strain ATCC 8585 / CBS 2359 / DSM 70799 / NBRC 1267 / NRRL Y-1140 / WM37)</name>
    <name type="common">Yeast</name>
    <name type="synonym">Candida sphaerica</name>
    <dbReference type="NCBI Taxonomy" id="284590"/>
    <lineage>
        <taxon>Eukaryota</taxon>
        <taxon>Fungi</taxon>
        <taxon>Dikarya</taxon>
        <taxon>Ascomycota</taxon>
        <taxon>Saccharomycotina</taxon>
        <taxon>Saccharomycetes</taxon>
        <taxon>Saccharomycetales</taxon>
        <taxon>Saccharomycetaceae</taxon>
        <taxon>Kluyveromyces</taxon>
    </lineage>
</organism>
<protein>
    <recommendedName>
        <fullName>Altered inheritance of mitochondria protein 11</fullName>
    </recommendedName>
</protein>
<accession>Q6CMH6</accession>
<gene>
    <name type="primary">AIM11</name>
    <name type="ordered locus">KLLA0E20153g</name>
</gene>
<dbReference type="EMBL" id="CR382125">
    <property type="protein sequence ID" value="CAG99950.1"/>
    <property type="molecule type" value="Genomic_DNA"/>
</dbReference>
<dbReference type="RefSeq" id="XP_454863.1">
    <property type="nucleotide sequence ID" value="XM_454863.1"/>
</dbReference>
<dbReference type="SMR" id="Q6CMH6"/>
<dbReference type="FunCoup" id="Q6CMH6">
    <property type="interactions" value="34"/>
</dbReference>
<dbReference type="PaxDb" id="284590-Q6CMH6"/>
<dbReference type="KEGG" id="kla:KLLA0_E20153g"/>
<dbReference type="eggNOG" id="ENOG502SAK0">
    <property type="taxonomic scope" value="Eukaryota"/>
</dbReference>
<dbReference type="HOGENOM" id="CLU_118700_0_0_1"/>
<dbReference type="InParanoid" id="Q6CMH6"/>
<dbReference type="OMA" id="RFAYKST"/>
<dbReference type="Proteomes" id="UP000000598">
    <property type="component" value="Chromosome E"/>
</dbReference>
<dbReference type="GO" id="GO:0016020">
    <property type="term" value="C:membrane"/>
    <property type="evidence" value="ECO:0007669"/>
    <property type="project" value="UniProtKB-SubCell"/>
</dbReference>
<dbReference type="GO" id="GO:0005739">
    <property type="term" value="C:mitochondrion"/>
    <property type="evidence" value="ECO:0007669"/>
    <property type="project" value="TreeGrafter"/>
</dbReference>
<dbReference type="InterPro" id="IPR038814">
    <property type="entry name" value="AIM11"/>
</dbReference>
<dbReference type="PANTHER" id="PTHR39136">
    <property type="entry name" value="ALTERED INHERITANCE OF MITOCHONDRIA PROTEIN 11"/>
    <property type="match status" value="1"/>
</dbReference>
<dbReference type="PANTHER" id="PTHR39136:SF1">
    <property type="entry name" value="ALTERED INHERITANCE OF MITOCHONDRIA PROTEIN 11"/>
    <property type="match status" value="1"/>
</dbReference>
<proteinExistence type="inferred from homology"/>
<sequence length="150" mass="16655">MSEVASVTDAQIEKFSLLYKERRKVQMMRFFGVTALTLISARLAFKGVASRKYIPTMFQLNHKPPPFSYKGEVVNALAYGTALSTGGFAMLGFGLCWIWDVSTLKELGNKLKELMGDGSEKDKLVSTNMDLDEDTQKVADALEAMLSTKK</sequence>
<name>AIM11_KLULA</name>
<feature type="chain" id="PRO_0000405648" description="Altered inheritance of mitochondria protein 11">
    <location>
        <begin position="1"/>
        <end position="150"/>
    </location>
</feature>
<feature type="transmembrane region" description="Helical" evidence="1">
    <location>
        <begin position="28"/>
        <end position="45"/>
    </location>
</feature>
<feature type="transmembrane region" description="Helical" evidence="1">
    <location>
        <begin position="77"/>
        <end position="99"/>
    </location>
</feature>
<comment type="subcellular location">
    <subcellularLocation>
        <location evidence="2">Membrane</location>
        <topology evidence="2">Multi-pass membrane protein</topology>
    </subcellularLocation>
</comment>
<comment type="similarity">
    <text evidence="2">Belongs to the AIM11 family.</text>
</comment>
<evidence type="ECO:0000255" key="1"/>
<evidence type="ECO:0000305" key="2"/>
<keyword id="KW-0472">Membrane</keyword>
<keyword id="KW-1185">Reference proteome</keyword>
<keyword id="KW-0812">Transmembrane</keyword>
<keyword id="KW-1133">Transmembrane helix</keyword>